<comment type="function">
    <text evidence="1">Catalyzes the NADPH-dependent reduction of L-glutamate 5-phosphate into L-glutamate 5-semialdehyde and phosphate. The product spontaneously undergoes cyclization to form 1-pyrroline-5-carboxylate.</text>
</comment>
<comment type="catalytic activity">
    <reaction evidence="1">
        <text>L-glutamate 5-semialdehyde + phosphate + NADP(+) = L-glutamyl 5-phosphate + NADPH + H(+)</text>
        <dbReference type="Rhea" id="RHEA:19541"/>
        <dbReference type="ChEBI" id="CHEBI:15378"/>
        <dbReference type="ChEBI" id="CHEBI:43474"/>
        <dbReference type="ChEBI" id="CHEBI:57783"/>
        <dbReference type="ChEBI" id="CHEBI:58066"/>
        <dbReference type="ChEBI" id="CHEBI:58274"/>
        <dbReference type="ChEBI" id="CHEBI:58349"/>
        <dbReference type="EC" id="1.2.1.41"/>
    </reaction>
</comment>
<comment type="pathway">
    <text evidence="1">Amino-acid biosynthesis; L-proline biosynthesis; L-glutamate 5-semialdehyde from L-glutamate: step 2/2.</text>
</comment>
<comment type="subcellular location">
    <subcellularLocation>
        <location evidence="1">Cytoplasm</location>
    </subcellularLocation>
</comment>
<comment type="similarity">
    <text evidence="1">Belongs to the gamma-glutamyl phosphate reductase family.</text>
</comment>
<name>PROA_BACHK</name>
<dbReference type="EC" id="1.2.1.41" evidence="1"/>
<dbReference type="EMBL" id="AE017355">
    <property type="protein sequence ID" value="AAT60127.1"/>
    <property type="molecule type" value="Genomic_DNA"/>
</dbReference>
<dbReference type="RefSeq" id="WP_001006634.1">
    <property type="nucleotide sequence ID" value="NC_005957.1"/>
</dbReference>
<dbReference type="RefSeq" id="YP_037054.1">
    <property type="nucleotide sequence ID" value="NC_005957.1"/>
</dbReference>
<dbReference type="SMR" id="Q6HHC2"/>
<dbReference type="KEGG" id="btk:BT9727_2730"/>
<dbReference type="PATRIC" id="fig|281309.8.peg.2897"/>
<dbReference type="HOGENOM" id="CLU_030231_0_0_9"/>
<dbReference type="UniPathway" id="UPA00098">
    <property type="reaction ID" value="UER00360"/>
</dbReference>
<dbReference type="Proteomes" id="UP000001301">
    <property type="component" value="Chromosome"/>
</dbReference>
<dbReference type="GO" id="GO:0005737">
    <property type="term" value="C:cytoplasm"/>
    <property type="evidence" value="ECO:0007669"/>
    <property type="project" value="UniProtKB-SubCell"/>
</dbReference>
<dbReference type="GO" id="GO:0004350">
    <property type="term" value="F:glutamate-5-semialdehyde dehydrogenase activity"/>
    <property type="evidence" value="ECO:0007669"/>
    <property type="project" value="UniProtKB-UniRule"/>
</dbReference>
<dbReference type="GO" id="GO:0050661">
    <property type="term" value="F:NADP binding"/>
    <property type="evidence" value="ECO:0007669"/>
    <property type="project" value="InterPro"/>
</dbReference>
<dbReference type="GO" id="GO:0055129">
    <property type="term" value="P:L-proline biosynthetic process"/>
    <property type="evidence" value="ECO:0007669"/>
    <property type="project" value="UniProtKB-UniRule"/>
</dbReference>
<dbReference type="CDD" id="cd07079">
    <property type="entry name" value="ALDH_F18-19_ProA-GPR"/>
    <property type="match status" value="1"/>
</dbReference>
<dbReference type="FunFam" id="3.40.309.10:FF:000006">
    <property type="entry name" value="Gamma-glutamyl phosphate reductase"/>
    <property type="match status" value="1"/>
</dbReference>
<dbReference type="Gene3D" id="3.40.605.10">
    <property type="entry name" value="Aldehyde Dehydrogenase, Chain A, domain 1"/>
    <property type="match status" value="1"/>
</dbReference>
<dbReference type="Gene3D" id="3.40.309.10">
    <property type="entry name" value="Aldehyde Dehydrogenase, Chain A, domain 2"/>
    <property type="match status" value="1"/>
</dbReference>
<dbReference type="HAMAP" id="MF_00412">
    <property type="entry name" value="ProA"/>
    <property type="match status" value="1"/>
</dbReference>
<dbReference type="InterPro" id="IPR016161">
    <property type="entry name" value="Ald_DH/histidinol_DH"/>
</dbReference>
<dbReference type="InterPro" id="IPR016163">
    <property type="entry name" value="Ald_DH_C"/>
</dbReference>
<dbReference type="InterPro" id="IPR016162">
    <property type="entry name" value="Ald_DH_N"/>
</dbReference>
<dbReference type="InterPro" id="IPR015590">
    <property type="entry name" value="Aldehyde_DH_dom"/>
</dbReference>
<dbReference type="InterPro" id="IPR020593">
    <property type="entry name" value="G-glutamylP_reductase_CS"/>
</dbReference>
<dbReference type="InterPro" id="IPR012134">
    <property type="entry name" value="Glu-5-SA_DH"/>
</dbReference>
<dbReference type="InterPro" id="IPR000965">
    <property type="entry name" value="GPR_dom"/>
</dbReference>
<dbReference type="NCBIfam" id="NF001221">
    <property type="entry name" value="PRK00197.1"/>
    <property type="match status" value="1"/>
</dbReference>
<dbReference type="NCBIfam" id="TIGR00407">
    <property type="entry name" value="proA"/>
    <property type="match status" value="1"/>
</dbReference>
<dbReference type="PANTHER" id="PTHR11063:SF8">
    <property type="entry name" value="DELTA-1-PYRROLINE-5-CARBOXYLATE SYNTHASE"/>
    <property type="match status" value="1"/>
</dbReference>
<dbReference type="PANTHER" id="PTHR11063">
    <property type="entry name" value="GLUTAMATE SEMIALDEHYDE DEHYDROGENASE"/>
    <property type="match status" value="1"/>
</dbReference>
<dbReference type="Pfam" id="PF00171">
    <property type="entry name" value="Aldedh"/>
    <property type="match status" value="1"/>
</dbReference>
<dbReference type="PIRSF" id="PIRSF000151">
    <property type="entry name" value="GPR"/>
    <property type="match status" value="1"/>
</dbReference>
<dbReference type="SUPFAM" id="SSF53720">
    <property type="entry name" value="ALDH-like"/>
    <property type="match status" value="1"/>
</dbReference>
<dbReference type="PROSITE" id="PS01223">
    <property type="entry name" value="PROA"/>
    <property type="match status" value="1"/>
</dbReference>
<reference key="1">
    <citation type="journal article" date="2006" name="J. Bacteriol.">
        <title>Pathogenomic sequence analysis of Bacillus cereus and Bacillus thuringiensis isolates closely related to Bacillus anthracis.</title>
        <authorList>
            <person name="Han C.S."/>
            <person name="Xie G."/>
            <person name="Challacombe J.F."/>
            <person name="Altherr M.R."/>
            <person name="Bhotika S.S."/>
            <person name="Bruce D."/>
            <person name="Campbell C.S."/>
            <person name="Campbell M.L."/>
            <person name="Chen J."/>
            <person name="Chertkov O."/>
            <person name="Cleland C."/>
            <person name="Dimitrijevic M."/>
            <person name="Doggett N.A."/>
            <person name="Fawcett J.J."/>
            <person name="Glavina T."/>
            <person name="Goodwin L.A."/>
            <person name="Hill K.K."/>
            <person name="Hitchcock P."/>
            <person name="Jackson P.J."/>
            <person name="Keim P."/>
            <person name="Kewalramani A.R."/>
            <person name="Longmire J."/>
            <person name="Lucas S."/>
            <person name="Malfatti S."/>
            <person name="McMurry K."/>
            <person name="Meincke L.J."/>
            <person name="Misra M."/>
            <person name="Moseman B.L."/>
            <person name="Mundt M."/>
            <person name="Munk A.C."/>
            <person name="Okinaka R.T."/>
            <person name="Parson-Quintana B."/>
            <person name="Reilly L.P."/>
            <person name="Richardson P."/>
            <person name="Robinson D.L."/>
            <person name="Rubin E."/>
            <person name="Saunders E."/>
            <person name="Tapia R."/>
            <person name="Tesmer J.G."/>
            <person name="Thayer N."/>
            <person name="Thompson L.S."/>
            <person name="Tice H."/>
            <person name="Ticknor L.O."/>
            <person name="Wills P.L."/>
            <person name="Brettin T.S."/>
            <person name="Gilna P."/>
        </authorList>
    </citation>
    <scope>NUCLEOTIDE SEQUENCE [LARGE SCALE GENOMIC DNA]</scope>
    <source>
        <strain>97-27</strain>
    </source>
</reference>
<proteinExistence type="inferred from homology"/>
<feature type="chain" id="PRO_0000189692" description="Gamma-glutamyl phosphate reductase">
    <location>
        <begin position="1"/>
        <end position="415"/>
    </location>
</feature>
<evidence type="ECO:0000255" key="1">
    <source>
        <dbReference type="HAMAP-Rule" id="MF_00412"/>
    </source>
</evidence>
<accession>Q6HHC2</accession>
<organism>
    <name type="scientific">Bacillus thuringiensis subsp. konkukian (strain 97-27)</name>
    <dbReference type="NCBI Taxonomy" id="281309"/>
    <lineage>
        <taxon>Bacteria</taxon>
        <taxon>Bacillati</taxon>
        <taxon>Bacillota</taxon>
        <taxon>Bacilli</taxon>
        <taxon>Bacillales</taxon>
        <taxon>Bacillaceae</taxon>
        <taxon>Bacillus</taxon>
        <taxon>Bacillus cereus group</taxon>
    </lineage>
</organism>
<protein>
    <recommendedName>
        <fullName evidence="1">Gamma-glutamyl phosphate reductase</fullName>
        <shortName evidence="1">GPR</shortName>
        <ecNumber evidence="1">1.2.1.41</ecNumber>
    </recommendedName>
    <alternativeName>
        <fullName evidence="1">Glutamate-5-semialdehyde dehydrogenase</fullName>
    </alternativeName>
    <alternativeName>
        <fullName evidence="1">Glutamyl-gamma-semialdehyde dehydrogenase</fullName>
        <shortName evidence="1">GSA dehydrogenase</shortName>
    </alternativeName>
</protein>
<keyword id="KW-0028">Amino-acid biosynthesis</keyword>
<keyword id="KW-0963">Cytoplasm</keyword>
<keyword id="KW-0521">NADP</keyword>
<keyword id="KW-0560">Oxidoreductase</keyword>
<keyword id="KW-0641">Proline biosynthesis</keyword>
<sequence length="415" mass="45597">MNEVLAKGKKAKEIARELVLKSTEQKNEALSAIADQLILETAYILEENKKDIEEGKAKGFSDSLLDRLMLNEQRIVDMTEGIKQLIELRDPVGECVSAWERPNGLSIQEMRVPLGVVGMIYEARPNVTVDAATICLKTGNAVILRGSSSAIHSNKAIVAVIHRALKQTSLPQESVQLIEDTTRDSAKQLFTMNDYLDVLIPRGGKQLIDTVVREASVPVLETGAGNCHVFIDETADKQMAFDIIINAKTQRPSVCNAIETIVLHEKWAEQYGSELFSSLKKRGVELRGDQKALAMDSSIVLASEEDWGTEFLSLTLAVKLVSSIEEAIHHINTYGSMHSEAIISENEENVSKFFVSVDAAALYHNASTRFTDGSEFGFGAEIGISTQKLHVRGPMGLPALTSTKYVIRGNGQIRK</sequence>
<gene>
    <name evidence="1" type="primary">proA</name>
    <name type="ordered locus">BT9727_2730</name>
</gene>